<organism>
    <name type="scientific">Synechococcus sp. (strain RCC307)</name>
    <dbReference type="NCBI Taxonomy" id="316278"/>
    <lineage>
        <taxon>Bacteria</taxon>
        <taxon>Bacillati</taxon>
        <taxon>Cyanobacteriota</taxon>
        <taxon>Cyanophyceae</taxon>
        <taxon>Synechococcales</taxon>
        <taxon>Synechococcaceae</taxon>
        <taxon>Synechococcus</taxon>
    </lineage>
</organism>
<reference key="1">
    <citation type="submission" date="2006-05" db="EMBL/GenBank/DDBJ databases">
        <authorList>
            <consortium name="Genoscope"/>
        </authorList>
    </citation>
    <scope>NUCLEOTIDE SEQUENCE [LARGE SCALE GENOMIC DNA]</scope>
    <source>
        <strain>RCC307</strain>
    </source>
</reference>
<keyword id="KW-1185">Reference proteome</keyword>
<dbReference type="EMBL" id="CT978603">
    <property type="protein sequence ID" value="CAK29233.1"/>
    <property type="molecule type" value="Genomic_DNA"/>
</dbReference>
<dbReference type="SMR" id="A5GWH4"/>
<dbReference type="STRING" id="316278.SynRCC307_2330"/>
<dbReference type="KEGG" id="syr:SynRCC307_2330"/>
<dbReference type="eggNOG" id="COG1058">
    <property type="taxonomic scope" value="Bacteria"/>
</dbReference>
<dbReference type="eggNOG" id="COG1546">
    <property type="taxonomic scope" value="Bacteria"/>
</dbReference>
<dbReference type="HOGENOM" id="CLU_030805_9_3_3"/>
<dbReference type="OrthoDB" id="9801454at2"/>
<dbReference type="Proteomes" id="UP000001115">
    <property type="component" value="Chromosome"/>
</dbReference>
<dbReference type="CDD" id="cd00885">
    <property type="entry name" value="cinA"/>
    <property type="match status" value="1"/>
</dbReference>
<dbReference type="Gene3D" id="3.30.70.2860">
    <property type="match status" value="1"/>
</dbReference>
<dbReference type="Gene3D" id="3.90.950.20">
    <property type="entry name" value="CinA-like"/>
    <property type="match status" value="1"/>
</dbReference>
<dbReference type="Gene3D" id="3.40.980.10">
    <property type="entry name" value="MoaB/Mog-like domain"/>
    <property type="match status" value="1"/>
</dbReference>
<dbReference type="HAMAP" id="MF_00226_B">
    <property type="entry name" value="CinA_B"/>
    <property type="match status" value="1"/>
</dbReference>
<dbReference type="InterPro" id="IPR050101">
    <property type="entry name" value="CinA"/>
</dbReference>
<dbReference type="InterPro" id="IPR036653">
    <property type="entry name" value="CinA-like_C"/>
</dbReference>
<dbReference type="InterPro" id="IPR008136">
    <property type="entry name" value="CinA_C"/>
</dbReference>
<dbReference type="InterPro" id="IPR041424">
    <property type="entry name" value="CinA_KH"/>
</dbReference>
<dbReference type="InterPro" id="IPR008135">
    <property type="entry name" value="Competence-induced_CinA"/>
</dbReference>
<dbReference type="InterPro" id="IPR036425">
    <property type="entry name" value="MoaB/Mog-like_dom_sf"/>
</dbReference>
<dbReference type="InterPro" id="IPR001453">
    <property type="entry name" value="MoaB/Mog_dom"/>
</dbReference>
<dbReference type="NCBIfam" id="TIGR00200">
    <property type="entry name" value="cinA_nterm"/>
    <property type="match status" value="1"/>
</dbReference>
<dbReference type="NCBIfam" id="TIGR00199">
    <property type="entry name" value="PncC_domain"/>
    <property type="match status" value="1"/>
</dbReference>
<dbReference type="NCBIfam" id="NF001813">
    <property type="entry name" value="PRK00549.1"/>
    <property type="match status" value="1"/>
</dbReference>
<dbReference type="PANTHER" id="PTHR13939">
    <property type="entry name" value="NICOTINAMIDE-NUCLEOTIDE AMIDOHYDROLASE PNCC"/>
    <property type="match status" value="1"/>
</dbReference>
<dbReference type="PANTHER" id="PTHR13939:SF0">
    <property type="entry name" value="NMN AMIDOHYDROLASE-LIKE PROTEIN YFAY"/>
    <property type="match status" value="1"/>
</dbReference>
<dbReference type="Pfam" id="PF02464">
    <property type="entry name" value="CinA"/>
    <property type="match status" value="1"/>
</dbReference>
<dbReference type="Pfam" id="PF18146">
    <property type="entry name" value="CinA_KH"/>
    <property type="match status" value="1"/>
</dbReference>
<dbReference type="Pfam" id="PF00994">
    <property type="entry name" value="MoCF_biosynth"/>
    <property type="match status" value="1"/>
</dbReference>
<dbReference type="PIRSF" id="PIRSF006728">
    <property type="entry name" value="CinA"/>
    <property type="match status" value="1"/>
</dbReference>
<dbReference type="SMART" id="SM00852">
    <property type="entry name" value="MoCF_biosynth"/>
    <property type="match status" value="1"/>
</dbReference>
<dbReference type="SUPFAM" id="SSF142433">
    <property type="entry name" value="CinA-like"/>
    <property type="match status" value="1"/>
</dbReference>
<dbReference type="SUPFAM" id="SSF53218">
    <property type="entry name" value="Molybdenum cofactor biosynthesis proteins"/>
    <property type="match status" value="1"/>
</dbReference>
<gene>
    <name type="ordered locus">SynRCC307_2330</name>
</gene>
<feature type="chain" id="PRO_0000336532" description="CinA-like protein">
    <location>
        <begin position="1"/>
        <end position="417"/>
    </location>
</feature>
<proteinExistence type="inferred from homology"/>
<protein>
    <recommendedName>
        <fullName evidence="1">CinA-like protein</fullName>
    </recommendedName>
</protein>
<name>CINAL_SYNR3</name>
<comment type="similarity">
    <text evidence="1">Belongs to the CinA family.</text>
</comment>
<sequence>MSTPRSGCEILCIGTELLLGNILNGNARWLAESLASLGIPHFRQGVVGDNPERLGEAVLEAASRSRLLICTGGLGPTPDDLTTETLAACFGVALEERADVLADLEAKLRARGRSLGSSNRKQALLPQGAEVLPNPTGTAPGIIWTPQPGFTVLTFPGVPSEMRAMWQQTAVPWLQAQHLVAGTFRSRLLHFWGLSESSLAESVAPLLELQNPTVAPYACQGEVKLRITAHGATASKAEAAIAPVEQELRRIGGEHCFGADDDSLASVVLQQLRSRNQTLAVAESCTGGGVGSALTAISGSSDVFLGGVIAYANRIKQDLLQVPSKLLEREGAVSAAVATAMAEGARRQLGSDWGVAVTGVAGPGGGSDSKPVGLVHFAVAGPDGCSHLERRYGDRRGRDWIRGLSVGDALNLLRLQL</sequence>
<evidence type="ECO:0000255" key="1">
    <source>
        <dbReference type="HAMAP-Rule" id="MF_00226"/>
    </source>
</evidence>
<accession>A5GWH4</accession>